<proteinExistence type="inferred from homology"/>
<evidence type="ECO:0000255" key="1">
    <source>
        <dbReference type="HAMAP-Rule" id="MF_00012"/>
    </source>
</evidence>
<dbReference type="EC" id="4.2.1.9" evidence="1"/>
<dbReference type="EMBL" id="AE015451">
    <property type="protein sequence ID" value="AAN70693.1"/>
    <property type="molecule type" value="Genomic_DNA"/>
</dbReference>
<dbReference type="RefSeq" id="NP_747229.1">
    <property type="nucleotide sequence ID" value="NC_002947.4"/>
</dbReference>
<dbReference type="RefSeq" id="WP_010955664.1">
    <property type="nucleotide sequence ID" value="NZ_CP169744.1"/>
</dbReference>
<dbReference type="SMR" id="Q88CQ2"/>
<dbReference type="STRING" id="160488.PP_5128"/>
<dbReference type="PaxDb" id="160488-PP_5128"/>
<dbReference type="GeneID" id="83682863"/>
<dbReference type="KEGG" id="ppu:PP_5128"/>
<dbReference type="PATRIC" id="fig|160488.4.peg.5473"/>
<dbReference type="eggNOG" id="COG0129">
    <property type="taxonomic scope" value="Bacteria"/>
</dbReference>
<dbReference type="HOGENOM" id="CLU_014271_4_2_6"/>
<dbReference type="OrthoDB" id="9807077at2"/>
<dbReference type="PhylomeDB" id="Q88CQ2"/>
<dbReference type="BioCyc" id="PPUT160488:G1G01-5472-MONOMER"/>
<dbReference type="UniPathway" id="UPA00047">
    <property type="reaction ID" value="UER00057"/>
</dbReference>
<dbReference type="UniPathway" id="UPA00049">
    <property type="reaction ID" value="UER00061"/>
</dbReference>
<dbReference type="Proteomes" id="UP000000556">
    <property type="component" value="Chromosome"/>
</dbReference>
<dbReference type="GO" id="GO:0005829">
    <property type="term" value="C:cytosol"/>
    <property type="evidence" value="ECO:0007669"/>
    <property type="project" value="TreeGrafter"/>
</dbReference>
<dbReference type="GO" id="GO:0051537">
    <property type="term" value="F:2 iron, 2 sulfur cluster binding"/>
    <property type="evidence" value="ECO:0007669"/>
    <property type="project" value="UniProtKB-UniRule"/>
</dbReference>
<dbReference type="GO" id="GO:0004160">
    <property type="term" value="F:dihydroxy-acid dehydratase activity"/>
    <property type="evidence" value="ECO:0007669"/>
    <property type="project" value="UniProtKB-UniRule"/>
</dbReference>
<dbReference type="GO" id="GO:0000287">
    <property type="term" value="F:magnesium ion binding"/>
    <property type="evidence" value="ECO:0007669"/>
    <property type="project" value="UniProtKB-UniRule"/>
</dbReference>
<dbReference type="GO" id="GO:0009097">
    <property type="term" value="P:isoleucine biosynthetic process"/>
    <property type="evidence" value="ECO:0007669"/>
    <property type="project" value="UniProtKB-UniRule"/>
</dbReference>
<dbReference type="GO" id="GO:0009099">
    <property type="term" value="P:L-valine biosynthetic process"/>
    <property type="evidence" value="ECO:0007669"/>
    <property type="project" value="UniProtKB-UniRule"/>
</dbReference>
<dbReference type="FunFam" id="3.50.30.80:FF:000001">
    <property type="entry name" value="Dihydroxy-acid dehydratase"/>
    <property type="match status" value="1"/>
</dbReference>
<dbReference type="Gene3D" id="3.50.30.80">
    <property type="entry name" value="IlvD/EDD C-terminal domain-like"/>
    <property type="match status" value="1"/>
</dbReference>
<dbReference type="HAMAP" id="MF_00012">
    <property type="entry name" value="IlvD"/>
    <property type="match status" value="1"/>
</dbReference>
<dbReference type="InterPro" id="IPR042096">
    <property type="entry name" value="Dihydro-acid_dehy_C"/>
</dbReference>
<dbReference type="InterPro" id="IPR004404">
    <property type="entry name" value="DihydroxyA_deHydtase"/>
</dbReference>
<dbReference type="InterPro" id="IPR020558">
    <property type="entry name" value="DiOHA_6PGluconate_deHydtase_CS"/>
</dbReference>
<dbReference type="InterPro" id="IPR056740">
    <property type="entry name" value="ILV_EDD_C"/>
</dbReference>
<dbReference type="InterPro" id="IPR000581">
    <property type="entry name" value="ILV_EDD_N"/>
</dbReference>
<dbReference type="InterPro" id="IPR037237">
    <property type="entry name" value="IlvD/EDD_N"/>
</dbReference>
<dbReference type="NCBIfam" id="TIGR00110">
    <property type="entry name" value="ilvD"/>
    <property type="match status" value="1"/>
</dbReference>
<dbReference type="NCBIfam" id="NF009103">
    <property type="entry name" value="PRK12448.1"/>
    <property type="match status" value="1"/>
</dbReference>
<dbReference type="PANTHER" id="PTHR43661">
    <property type="entry name" value="D-XYLONATE DEHYDRATASE"/>
    <property type="match status" value="1"/>
</dbReference>
<dbReference type="PANTHER" id="PTHR43661:SF3">
    <property type="entry name" value="D-XYLONATE DEHYDRATASE YAGF-RELATED"/>
    <property type="match status" value="1"/>
</dbReference>
<dbReference type="Pfam" id="PF24877">
    <property type="entry name" value="ILV_EDD_C"/>
    <property type="match status" value="1"/>
</dbReference>
<dbReference type="Pfam" id="PF00920">
    <property type="entry name" value="ILVD_EDD_N"/>
    <property type="match status" value="1"/>
</dbReference>
<dbReference type="SUPFAM" id="SSF143975">
    <property type="entry name" value="IlvD/EDD N-terminal domain-like"/>
    <property type="match status" value="1"/>
</dbReference>
<dbReference type="SUPFAM" id="SSF52016">
    <property type="entry name" value="LeuD/IlvD-like"/>
    <property type="match status" value="1"/>
</dbReference>
<dbReference type="PROSITE" id="PS00886">
    <property type="entry name" value="ILVD_EDD_1"/>
    <property type="match status" value="1"/>
</dbReference>
<dbReference type="PROSITE" id="PS00887">
    <property type="entry name" value="ILVD_EDD_2"/>
    <property type="match status" value="1"/>
</dbReference>
<feature type="chain" id="PRO_0000103493" description="Dihydroxy-acid dehydratase">
    <location>
        <begin position="1"/>
        <end position="613"/>
    </location>
</feature>
<feature type="active site" description="Proton acceptor" evidence="1">
    <location>
        <position position="515"/>
    </location>
</feature>
<feature type="binding site" evidence="1">
    <location>
        <position position="81"/>
    </location>
    <ligand>
        <name>Mg(2+)</name>
        <dbReference type="ChEBI" id="CHEBI:18420"/>
    </ligand>
</feature>
<feature type="binding site" evidence="1">
    <location>
        <position position="122"/>
    </location>
    <ligand>
        <name>[2Fe-2S] cluster</name>
        <dbReference type="ChEBI" id="CHEBI:190135"/>
    </ligand>
</feature>
<feature type="binding site" evidence="1">
    <location>
        <position position="123"/>
    </location>
    <ligand>
        <name>Mg(2+)</name>
        <dbReference type="ChEBI" id="CHEBI:18420"/>
    </ligand>
</feature>
<feature type="binding site" description="via carbamate group" evidence="1">
    <location>
        <position position="124"/>
    </location>
    <ligand>
        <name>Mg(2+)</name>
        <dbReference type="ChEBI" id="CHEBI:18420"/>
    </ligand>
</feature>
<feature type="binding site" evidence="1">
    <location>
        <position position="193"/>
    </location>
    <ligand>
        <name>[2Fe-2S] cluster</name>
        <dbReference type="ChEBI" id="CHEBI:190135"/>
    </ligand>
</feature>
<feature type="binding site" evidence="1">
    <location>
        <position position="489"/>
    </location>
    <ligand>
        <name>Mg(2+)</name>
        <dbReference type="ChEBI" id="CHEBI:18420"/>
    </ligand>
</feature>
<feature type="modified residue" description="N6-carboxylysine" evidence="1">
    <location>
        <position position="124"/>
    </location>
</feature>
<organism>
    <name type="scientific">Pseudomonas putida (strain ATCC 47054 / DSM 6125 / CFBP 8728 / NCIMB 11950 / KT2440)</name>
    <dbReference type="NCBI Taxonomy" id="160488"/>
    <lineage>
        <taxon>Bacteria</taxon>
        <taxon>Pseudomonadati</taxon>
        <taxon>Pseudomonadota</taxon>
        <taxon>Gammaproteobacteria</taxon>
        <taxon>Pseudomonadales</taxon>
        <taxon>Pseudomonadaceae</taxon>
        <taxon>Pseudomonas</taxon>
    </lineage>
</organism>
<sequence length="613" mass="65672">MPDYRSKTSTQGRNMAGARALWRATGMKDEDFKKPIIAIANSFTQFVPGHVHLKDLGQLVAREIERAGGVAKEFNTIAVDDGIAMGHDGMLYSLPSREIIADAVEYMVNAHCADAIVCISNCDKITPGMLMAALRLNIPVIFVSGGPMEAGKTKLASHGLDLVDAMVIAADSTASDEKVAEYERSACPTCGSCSGMFTANSMNCLTEALGLALPGNGSTLATHSDREQLFLTAGRTIVELCKRYYGENDESVLPRSIANFKAFENAMMLDIAMGGSTNTILHLLAAAQEGEVAFDLRDIDRLSRKVPQLCKVAPNIQKYHMEDVHRAGGIFSILGSLARGGLLHTDLPTVHSRSMEEAIAKWDITQTDDEAVHTFFKAGPAGIPTQTAFSQSTRWETLDDDRENGCIRSFEHAYSQEGGLAVLYGNIALDGCVVKTAGVDESIHVFEGTAKIFESQDSAVRGILADEVKAGDIVIIRYEGPKGGPGMQEMLYPTSYLKSKGLGKACALLTDGRFSGGTSGLSIGHASPEAAAGGAIGLVRDGDKVLIDIPNRSINLLVSDEELAQRRVEQDKKGWKPAEVRPRKVTTALKAYALLATSADKGAVRNKAMLEGL</sequence>
<reference key="1">
    <citation type="journal article" date="2002" name="Environ. Microbiol.">
        <title>Complete genome sequence and comparative analysis of the metabolically versatile Pseudomonas putida KT2440.</title>
        <authorList>
            <person name="Nelson K.E."/>
            <person name="Weinel C."/>
            <person name="Paulsen I.T."/>
            <person name="Dodson R.J."/>
            <person name="Hilbert H."/>
            <person name="Martins dos Santos V.A.P."/>
            <person name="Fouts D.E."/>
            <person name="Gill S.R."/>
            <person name="Pop M."/>
            <person name="Holmes M."/>
            <person name="Brinkac L.M."/>
            <person name="Beanan M.J."/>
            <person name="DeBoy R.T."/>
            <person name="Daugherty S.C."/>
            <person name="Kolonay J.F."/>
            <person name="Madupu R."/>
            <person name="Nelson W.C."/>
            <person name="White O."/>
            <person name="Peterson J.D."/>
            <person name="Khouri H.M."/>
            <person name="Hance I."/>
            <person name="Chris Lee P."/>
            <person name="Holtzapple E.K."/>
            <person name="Scanlan D."/>
            <person name="Tran K."/>
            <person name="Moazzez A."/>
            <person name="Utterback T.R."/>
            <person name="Rizzo M."/>
            <person name="Lee K."/>
            <person name="Kosack D."/>
            <person name="Moestl D."/>
            <person name="Wedler H."/>
            <person name="Lauber J."/>
            <person name="Stjepandic D."/>
            <person name="Hoheisel J."/>
            <person name="Straetz M."/>
            <person name="Heim S."/>
            <person name="Kiewitz C."/>
            <person name="Eisen J.A."/>
            <person name="Timmis K.N."/>
            <person name="Duesterhoeft A."/>
            <person name="Tuemmler B."/>
            <person name="Fraser C.M."/>
        </authorList>
    </citation>
    <scope>NUCLEOTIDE SEQUENCE [LARGE SCALE GENOMIC DNA]</scope>
    <source>
        <strain>ATCC 47054 / DSM 6125 / CFBP 8728 / NCIMB 11950 / KT2440</strain>
    </source>
</reference>
<name>ILVD_PSEPK</name>
<gene>
    <name evidence="1" type="primary">ilvD</name>
    <name type="ordered locus">PP_5128</name>
</gene>
<protein>
    <recommendedName>
        <fullName evidence="1">Dihydroxy-acid dehydratase</fullName>
        <shortName evidence="1">DAD</shortName>
        <ecNumber evidence="1">4.2.1.9</ecNumber>
    </recommendedName>
</protein>
<comment type="function">
    <text evidence="1">Functions in the biosynthesis of branched-chain amino acids. Catalyzes the dehydration of (2R,3R)-2,3-dihydroxy-3-methylpentanoate (2,3-dihydroxy-3-methylvalerate) into 2-oxo-3-methylpentanoate (2-oxo-3-methylvalerate) and of (2R)-2,3-dihydroxy-3-methylbutanoate (2,3-dihydroxyisovalerate) into 2-oxo-3-methylbutanoate (2-oxoisovalerate), the penultimate precursor to L-isoleucine and L-valine, respectively.</text>
</comment>
<comment type="catalytic activity">
    <reaction evidence="1">
        <text>(2R)-2,3-dihydroxy-3-methylbutanoate = 3-methyl-2-oxobutanoate + H2O</text>
        <dbReference type="Rhea" id="RHEA:24809"/>
        <dbReference type="ChEBI" id="CHEBI:11851"/>
        <dbReference type="ChEBI" id="CHEBI:15377"/>
        <dbReference type="ChEBI" id="CHEBI:49072"/>
        <dbReference type="EC" id="4.2.1.9"/>
    </reaction>
    <physiologicalReaction direction="left-to-right" evidence="1">
        <dbReference type="Rhea" id="RHEA:24810"/>
    </physiologicalReaction>
</comment>
<comment type="catalytic activity">
    <reaction evidence="1">
        <text>(2R,3R)-2,3-dihydroxy-3-methylpentanoate = (S)-3-methyl-2-oxopentanoate + H2O</text>
        <dbReference type="Rhea" id="RHEA:27694"/>
        <dbReference type="ChEBI" id="CHEBI:15377"/>
        <dbReference type="ChEBI" id="CHEBI:35146"/>
        <dbReference type="ChEBI" id="CHEBI:49258"/>
        <dbReference type="EC" id="4.2.1.9"/>
    </reaction>
    <physiologicalReaction direction="left-to-right" evidence="1">
        <dbReference type="Rhea" id="RHEA:27695"/>
    </physiologicalReaction>
</comment>
<comment type="cofactor">
    <cofactor evidence="1">
        <name>[2Fe-2S] cluster</name>
        <dbReference type="ChEBI" id="CHEBI:190135"/>
    </cofactor>
    <text evidence="1">Binds 1 [2Fe-2S] cluster per subunit. This cluster acts as a Lewis acid cofactor.</text>
</comment>
<comment type="cofactor">
    <cofactor evidence="1">
        <name>Mg(2+)</name>
        <dbReference type="ChEBI" id="CHEBI:18420"/>
    </cofactor>
</comment>
<comment type="pathway">
    <text evidence="1">Amino-acid biosynthesis; L-isoleucine biosynthesis; L-isoleucine from 2-oxobutanoate: step 3/4.</text>
</comment>
<comment type="pathway">
    <text evidence="1">Amino-acid biosynthesis; L-valine biosynthesis; L-valine from pyruvate: step 3/4.</text>
</comment>
<comment type="subunit">
    <text evidence="1">Homodimer.</text>
</comment>
<comment type="similarity">
    <text evidence="1">Belongs to the IlvD/Edd family.</text>
</comment>
<accession>Q88CQ2</accession>
<keyword id="KW-0001">2Fe-2S</keyword>
<keyword id="KW-0028">Amino-acid biosynthesis</keyword>
<keyword id="KW-0100">Branched-chain amino acid biosynthesis</keyword>
<keyword id="KW-0408">Iron</keyword>
<keyword id="KW-0411">Iron-sulfur</keyword>
<keyword id="KW-0456">Lyase</keyword>
<keyword id="KW-0460">Magnesium</keyword>
<keyword id="KW-0479">Metal-binding</keyword>
<keyword id="KW-1185">Reference proteome</keyword>